<comment type="function">
    <text evidence="1">Catalyzes the removal of terminal sialic acid residues from viral and cellular glycoconjugates. Cleaves off the terminal sialic acids on the glycosylated HA during virus budding to facilitate virus release. Additionally helps virus spread through the circulation by further removing sialic acids from the cell surface. These cleavages prevent self-aggregation and ensure the efficient spread of the progeny virus from cell to cell. Otherwise, infection would be limited to one round of replication. Described as a receptor-destroying enzyme because it cleaves a terminal sialic acid from the cellular receptors. May facilitate viral invasion of the upper airways by cleaving the sialic acid moieties on the mucin of the airway epithelial cells. Likely to plays a role in the budding process through its association with lipid rafts during intracellular transport. May additionally display a raft-association independent effect on budding. Plays a role in the determination of host range restriction on replication and virulence. Sialidase activity in late endosome/lysosome traffic seems to enhance virus replication.</text>
</comment>
<comment type="catalytic activity">
    <reaction evidence="1">
        <text>Hydrolysis of alpha-(2-&gt;3)-, alpha-(2-&gt;6)-, alpha-(2-&gt;8)- glycosidic linkages of terminal sialic acid residues in oligosaccharides, glycoproteins, glycolipids, colominic acid and synthetic substrates.</text>
        <dbReference type="EC" id="3.2.1.18"/>
    </reaction>
</comment>
<comment type="cofactor">
    <cofactor evidence="1">
        <name>Ca(2+)</name>
        <dbReference type="ChEBI" id="CHEBI:29108"/>
    </cofactor>
</comment>
<comment type="activity regulation">
    <text evidence="1">Inhibited by the neuraminidase inhibitors zanamivir (Relenza) and oseltamivir (Tamiflu). These drugs interfere with the release of progeny virus from infected cells and are effective against all influenza strains. Resistance to neuraminidase inhibitors is quite rare.</text>
</comment>
<comment type="subunit">
    <text evidence="1">Homotetramer.</text>
</comment>
<comment type="subcellular location">
    <subcellularLocation>
        <location evidence="1">Virion membrane</location>
    </subcellularLocation>
    <subcellularLocation>
        <location evidence="1">Host apical cell membrane</location>
        <topology evidence="1">Single-pass type II membrane protein</topology>
    </subcellularLocation>
    <text evidence="1">Preferentially accumulates at the apical plasma membrane in infected polarized epithelial cells, which is the virus assembly site. Uses lipid rafts for cell surface transport and apical sorting. In the virion, forms a mushroom-shaped spike on the surface of the membrane.</text>
</comment>
<comment type="domain">
    <text evidence="1">Intact N-terminus is essential for virion morphogenesis. Possesses two apical sorting signals, one in the ectodomain, which is likely to be a glycan, and the other in the transmembrane domain. The transmembrane domain also plays a role in lipid raft association.</text>
</comment>
<comment type="PTM">
    <text evidence="1">N-glycosylated.</text>
</comment>
<comment type="miscellaneous">
    <text>The influenza A genome consist of 8 RNA segments. Genetic variation of hemagglutinin and/or neuraminidase genes results in the emergence of new influenza strains. The mechanism of variation can be the result of point mutations or the result of genetic reassortment between segments of two different strains.</text>
</comment>
<comment type="similarity">
    <text evidence="1">Belongs to the glycosyl hydrolase 34 family.</text>
</comment>
<proteinExistence type="inferred from homology"/>
<reference key="1">
    <citation type="journal article" date="2006" name="Proc. Natl. Acad. Sci. U.S.A.">
        <title>Emergence and predominance of an H5N1 influenza variant in China.</title>
        <authorList>
            <person name="Smith G.J."/>
            <person name="Fan X.H."/>
            <person name="Wang J."/>
            <person name="Li K.S."/>
            <person name="Qin K."/>
            <person name="Zhang J.X."/>
            <person name="Vijaykrishna D."/>
            <person name="Cheung C.L."/>
            <person name="Huang K."/>
            <person name="Rayner J.M."/>
            <person name="Peiris J.S."/>
            <person name="Chen H."/>
            <person name="Webster R.G."/>
            <person name="Guan Y."/>
        </authorList>
    </citation>
    <scope>NUCLEOTIDE SEQUENCE [GENOMIC RNA]</scope>
</reference>
<accession>Q2LFV4</accession>
<name>NRAM_I05A1</name>
<sequence>TIGSICMVIGIVSLMLQIGNMISIWVSHSIQTGNQNQVEPISNTNFLTEKAVASVTLAGNSSLCPIRGWAVHSKDNSIRIGSKGDVFVIREPFISCSHLECRTFFLTQGALLNDKHSNGTVKDRSPHRTLMSCPVGEAPSPYNSRFESVAWSASACHDGTSWLTIGISGPDNGAVAVLKYNGMITDTIKSWRNNILRTQESECACVNGSCFTVMTDGPSNGQASYKIFKMEKGKVVKSVELDAPNYHYEECSCYPDAGEITCVCRDNWHGSNRPWVSFNQNLEYQIGYICSGVFGDNPRPNDGTGSCGPVSPNGAYGVKGFSFKYGNGVWIGRTKSPNSRSGFEMIWDPNGWTETDSSFSVKQDIVAITDWSGYSGSFVQHPELTGLDCIRPCFWVELIRGRPKESTIWTSGSSISFCGVNSDTVSWSWPDGAELPFTIDK</sequence>
<dbReference type="EC" id="3.2.1.18" evidence="1"/>
<dbReference type="EMBL" id="DQ321028">
    <property type="protein sequence ID" value="ABC66670.1"/>
    <property type="molecule type" value="Genomic_RNA"/>
</dbReference>
<dbReference type="SMR" id="Q2LFV4"/>
<dbReference type="CAZy" id="GH34">
    <property type="family name" value="Glycoside Hydrolase Family 34"/>
</dbReference>
<dbReference type="GlyCosmos" id="Q2LFV4">
    <property type="glycosylation" value="3 sites, No reported glycans"/>
</dbReference>
<dbReference type="GO" id="GO:0020002">
    <property type="term" value="C:host cell plasma membrane"/>
    <property type="evidence" value="ECO:0007669"/>
    <property type="project" value="UniProtKB-SubCell"/>
</dbReference>
<dbReference type="GO" id="GO:0016020">
    <property type="term" value="C:membrane"/>
    <property type="evidence" value="ECO:0007669"/>
    <property type="project" value="UniProtKB-KW"/>
</dbReference>
<dbReference type="GO" id="GO:0055036">
    <property type="term" value="C:virion membrane"/>
    <property type="evidence" value="ECO:0007669"/>
    <property type="project" value="UniProtKB-SubCell"/>
</dbReference>
<dbReference type="GO" id="GO:0004308">
    <property type="term" value="F:exo-alpha-sialidase activity"/>
    <property type="evidence" value="ECO:0007669"/>
    <property type="project" value="UniProtKB-EC"/>
</dbReference>
<dbReference type="GO" id="GO:0046872">
    <property type="term" value="F:metal ion binding"/>
    <property type="evidence" value="ECO:0007669"/>
    <property type="project" value="UniProtKB-KW"/>
</dbReference>
<dbReference type="GO" id="GO:0005975">
    <property type="term" value="P:carbohydrate metabolic process"/>
    <property type="evidence" value="ECO:0007669"/>
    <property type="project" value="InterPro"/>
</dbReference>
<dbReference type="GO" id="GO:0046761">
    <property type="term" value="P:viral budding from plasma membrane"/>
    <property type="evidence" value="ECO:0007669"/>
    <property type="project" value="InterPro"/>
</dbReference>
<dbReference type="CDD" id="cd15483">
    <property type="entry name" value="Influenza_NA"/>
    <property type="match status" value="1"/>
</dbReference>
<dbReference type="FunFam" id="2.120.10.10:FF:000001">
    <property type="entry name" value="Neuraminidase"/>
    <property type="match status" value="1"/>
</dbReference>
<dbReference type="Gene3D" id="2.120.10.10">
    <property type="match status" value="1"/>
</dbReference>
<dbReference type="HAMAP" id="MF_04071">
    <property type="entry name" value="INFV_NRAM"/>
    <property type="match status" value="1"/>
</dbReference>
<dbReference type="InterPro" id="IPR001860">
    <property type="entry name" value="Glyco_hydro_34"/>
</dbReference>
<dbReference type="InterPro" id="IPR033654">
    <property type="entry name" value="Sialidase_Influenza_A/B"/>
</dbReference>
<dbReference type="InterPro" id="IPR036278">
    <property type="entry name" value="Sialidase_sf"/>
</dbReference>
<dbReference type="Pfam" id="PF00064">
    <property type="entry name" value="Neur"/>
    <property type="match status" value="1"/>
</dbReference>
<dbReference type="SUPFAM" id="SSF50939">
    <property type="entry name" value="Sialidases"/>
    <property type="match status" value="1"/>
</dbReference>
<protein>
    <recommendedName>
        <fullName evidence="1">Neuraminidase</fullName>
        <ecNumber evidence="1">3.2.1.18</ecNumber>
    </recommendedName>
</protein>
<organismHost>
    <name type="scientific">Aves</name>
    <dbReference type="NCBI Taxonomy" id="8782"/>
</organismHost>
<organismHost>
    <name type="scientific">Felis catus</name>
    <name type="common">Cat</name>
    <name type="synonym">Felis silvestris catus</name>
    <dbReference type="NCBI Taxonomy" id="9685"/>
</organismHost>
<organismHost>
    <name type="scientific">Homo sapiens</name>
    <name type="common">Human</name>
    <dbReference type="NCBI Taxonomy" id="9606"/>
</organismHost>
<organismHost>
    <name type="scientific">Panthera pardus</name>
    <name type="common">Leopard</name>
    <name type="synonym">Felis pardus</name>
    <dbReference type="NCBI Taxonomy" id="9691"/>
</organismHost>
<organismHost>
    <name type="scientific">Panthera tigris</name>
    <name type="common">Tiger</name>
    <dbReference type="NCBI Taxonomy" id="9694"/>
</organismHost>
<organismHost>
    <name type="scientific">Sus scrofa</name>
    <name type="common">Pig</name>
    <dbReference type="NCBI Taxonomy" id="9823"/>
</organismHost>
<feature type="chain" id="PRO_0000310943" description="Neuraminidase">
    <location>
        <begin position="1" status="less than"/>
        <end position="441" status="greater than"/>
    </location>
</feature>
<feature type="topological domain" description="Intravirion" evidence="1">
    <location>
        <begin position="1"/>
        <end position="4"/>
    </location>
</feature>
<feature type="transmembrane region" description="Helical" evidence="1">
    <location>
        <begin position="5"/>
        <end position="25"/>
    </location>
</feature>
<feature type="topological domain" description="Virion surface" evidence="1">
    <location>
        <begin position="26"/>
        <end position="441"/>
    </location>
</feature>
<feature type="region of interest" description="Involved in apical transport and lipid raft association" evidence="1">
    <location>
        <begin position="3"/>
        <end position="25"/>
    </location>
</feature>
<feature type="region of interest" description="Hypervariable stalk region" evidence="1">
    <location>
        <begin position="28"/>
        <end position="62"/>
    </location>
</feature>
<feature type="region of interest" description="Head of neuraminidase" evidence="1">
    <location>
        <begin position="63"/>
        <end position="441"/>
    </location>
</feature>
<feature type="active site" description="Proton donor/acceptor" evidence="1">
    <location>
        <position position="123"/>
    </location>
</feature>
<feature type="active site" description="Nucleophile" evidence="1">
    <location>
        <position position="374"/>
    </location>
</feature>
<feature type="binding site" evidence="1">
    <location>
        <position position="90"/>
    </location>
    <ligand>
        <name>substrate</name>
    </ligand>
</feature>
<feature type="binding site" evidence="1">
    <location>
        <position position="124"/>
    </location>
    <ligand>
        <name>substrate</name>
    </ligand>
</feature>
<feature type="binding site" evidence="1">
    <location>
        <begin position="249"/>
        <end position="250"/>
    </location>
    <ligand>
        <name>substrate</name>
    </ligand>
</feature>
<feature type="binding site" evidence="1">
    <location>
        <position position="265"/>
    </location>
    <ligand>
        <name>substrate</name>
    </ligand>
</feature>
<feature type="binding site" evidence="1">
    <location>
        <position position="266"/>
    </location>
    <ligand>
        <name>Ca(2+)</name>
        <dbReference type="ChEBI" id="CHEBI:29108"/>
    </ligand>
</feature>
<feature type="binding site" evidence="1">
    <location>
        <position position="270"/>
    </location>
    <ligand>
        <name>Ca(2+)</name>
        <dbReference type="ChEBI" id="CHEBI:29108"/>
    </ligand>
</feature>
<feature type="binding site" evidence="1">
    <location>
        <position position="296"/>
    </location>
    <ligand>
        <name>Ca(2+)</name>
        <dbReference type="ChEBI" id="CHEBI:29108"/>
    </ligand>
</feature>
<feature type="binding site" evidence="1">
    <location>
        <position position="340"/>
    </location>
    <ligand>
        <name>substrate</name>
    </ligand>
</feature>
<feature type="glycosylation site" description="N-linked (GlcNAc...) asparagine; by host" evidence="1">
    <location>
        <position position="60"/>
    </location>
</feature>
<feature type="glycosylation site" description="N-linked (GlcNAc...) asparagine; by host" evidence="1">
    <location>
        <position position="118"/>
    </location>
</feature>
<feature type="glycosylation site" description="N-linked (GlcNAc...) asparagine; by host" evidence="1">
    <location>
        <position position="207"/>
    </location>
</feature>
<feature type="disulfide bond" evidence="1">
    <location>
        <begin position="64"/>
        <end position="389"/>
    </location>
</feature>
<feature type="disulfide bond" evidence="1">
    <location>
        <begin position="96"/>
        <end position="101"/>
    </location>
</feature>
<feature type="disulfide bond" evidence="1">
    <location>
        <begin position="156"/>
        <end position="203"/>
    </location>
</feature>
<feature type="disulfide bond" evidence="1">
    <location>
        <begin position="205"/>
        <end position="210"/>
    </location>
</feature>
<feature type="disulfide bond" evidence="1">
    <location>
        <begin position="251"/>
        <end position="264"/>
    </location>
</feature>
<feature type="disulfide bond" evidence="1">
    <location>
        <begin position="253"/>
        <end position="262"/>
    </location>
</feature>
<feature type="disulfide bond" evidence="1">
    <location>
        <begin position="290"/>
        <end position="307"/>
    </location>
</feature>
<feature type="disulfide bond" evidence="1">
    <location>
        <begin position="393"/>
        <end position="418"/>
    </location>
</feature>
<feature type="non-terminal residue">
    <location>
        <position position="1"/>
    </location>
</feature>
<feature type="non-terminal residue">
    <location>
        <position position="441"/>
    </location>
</feature>
<evidence type="ECO:0000255" key="1">
    <source>
        <dbReference type="HAMAP-Rule" id="MF_04071"/>
    </source>
</evidence>
<organism>
    <name type="scientific">Influenza A virus (strain A/Goose/Guangxi/345/2005 H5N1 genotype G)</name>
    <dbReference type="NCBI Taxonomy" id="365089"/>
    <lineage>
        <taxon>Viruses</taxon>
        <taxon>Riboviria</taxon>
        <taxon>Orthornavirae</taxon>
        <taxon>Negarnaviricota</taxon>
        <taxon>Polyploviricotina</taxon>
        <taxon>Insthoviricetes</taxon>
        <taxon>Articulavirales</taxon>
        <taxon>Orthomyxoviridae</taxon>
        <taxon>Alphainfluenzavirus</taxon>
        <taxon>Alphainfluenzavirus influenzae</taxon>
        <taxon>Influenza A virus</taxon>
    </lineage>
</organism>
<gene>
    <name evidence="1" type="primary">NA</name>
</gene>
<keyword id="KW-0106">Calcium</keyword>
<keyword id="KW-1015">Disulfide bond</keyword>
<keyword id="KW-0325">Glycoprotein</keyword>
<keyword id="KW-0326">Glycosidase</keyword>
<keyword id="KW-1032">Host cell membrane</keyword>
<keyword id="KW-1043">Host membrane</keyword>
<keyword id="KW-0378">Hydrolase</keyword>
<keyword id="KW-0472">Membrane</keyword>
<keyword id="KW-0479">Metal-binding</keyword>
<keyword id="KW-0735">Signal-anchor</keyword>
<keyword id="KW-0812">Transmembrane</keyword>
<keyword id="KW-1133">Transmembrane helix</keyword>
<keyword id="KW-0946">Virion</keyword>